<organism>
    <name type="scientific">Agrobacterium fabrum (strain C58 / ATCC 33970)</name>
    <name type="common">Agrobacterium tumefaciens (strain C58)</name>
    <dbReference type="NCBI Taxonomy" id="176299"/>
    <lineage>
        <taxon>Bacteria</taxon>
        <taxon>Pseudomonadati</taxon>
        <taxon>Pseudomonadota</taxon>
        <taxon>Alphaproteobacteria</taxon>
        <taxon>Hyphomicrobiales</taxon>
        <taxon>Rhizobiaceae</taxon>
        <taxon>Rhizobium/Agrobacterium group</taxon>
        <taxon>Agrobacterium</taxon>
        <taxon>Agrobacterium tumefaciens complex</taxon>
    </lineage>
</organism>
<name>HISZ_AGRFC</name>
<proteinExistence type="inferred from homology"/>
<reference key="1">
    <citation type="journal article" date="2001" name="Science">
        <title>The genome of the natural genetic engineer Agrobacterium tumefaciens C58.</title>
        <authorList>
            <person name="Wood D.W."/>
            <person name="Setubal J.C."/>
            <person name="Kaul R."/>
            <person name="Monks D.E."/>
            <person name="Kitajima J.P."/>
            <person name="Okura V.K."/>
            <person name="Zhou Y."/>
            <person name="Chen L."/>
            <person name="Wood G.E."/>
            <person name="Almeida N.F. Jr."/>
            <person name="Woo L."/>
            <person name="Chen Y."/>
            <person name="Paulsen I.T."/>
            <person name="Eisen J.A."/>
            <person name="Karp P.D."/>
            <person name="Bovee D. Sr."/>
            <person name="Chapman P."/>
            <person name="Clendenning J."/>
            <person name="Deatherage G."/>
            <person name="Gillet W."/>
            <person name="Grant C."/>
            <person name="Kutyavin T."/>
            <person name="Levy R."/>
            <person name="Li M.-J."/>
            <person name="McClelland E."/>
            <person name="Palmieri A."/>
            <person name="Raymond C."/>
            <person name="Rouse G."/>
            <person name="Saenphimmachak C."/>
            <person name="Wu Z."/>
            <person name="Romero P."/>
            <person name="Gordon D."/>
            <person name="Zhang S."/>
            <person name="Yoo H."/>
            <person name="Tao Y."/>
            <person name="Biddle P."/>
            <person name="Jung M."/>
            <person name="Krespan W."/>
            <person name="Perry M."/>
            <person name="Gordon-Kamm B."/>
            <person name="Liao L."/>
            <person name="Kim S."/>
            <person name="Hendrick C."/>
            <person name="Zhao Z.-Y."/>
            <person name="Dolan M."/>
            <person name="Chumley F."/>
            <person name="Tingey S.V."/>
            <person name="Tomb J.-F."/>
            <person name="Gordon M.P."/>
            <person name="Olson M.V."/>
            <person name="Nester E.W."/>
        </authorList>
    </citation>
    <scope>NUCLEOTIDE SEQUENCE [LARGE SCALE GENOMIC DNA]</scope>
    <source>
        <strain>C58 / ATCC 33970</strain>
    </source>
</reference>
<reference key="2">
    <citation type="journal article" date="2001" name="Science">
        <title>Genome sequence of the plant pathogen and biotechnology agent Agrobacterium tumefaciens C58.</title>
        <authorList>
            <person name="Goodner B."/>
            <person name="Hinkle G."/>
            <person name="Gattung S."/>
            <person name="Miller N."/>
            <person name="Blanchard M."/>
            <person name="Qurollo B."/>
            <person name="Goldman B.S."/>
            <person name="Cao Y."/>
            <person name="Askenazi M."/>
            <person name="Halling C."/>
            <person name="Mullin L."/>
            <person name="Houmiel K."/>
            <person name="Gordon J."/>
            <person name="Vaudin M."/>
            <person name="Iartchouk O."/>
            <person name="Epp A."/>
            <person name="Liu F."/>
            <person name="Wollam C."/>
            <person name="Allinger M."/>
            <person name="Doughty D."/>
            <person name="Scott C."/>
            <person name="Lappas C."/>
            <person name="Markelz B."/>
            <person name="Flanagan C."/>
            <person name="Crowell C."/>
            <person name="Gurson J."/>
            <person name="Lomo C."/>
            <person name="Sear C."/>
            <person name="Strub G."/>
            <person name="Cielo C."/>
            <person name="Slater S."/>
        </authorList>
    </citation>
    <scope>NUCLEOTIDE SEQUENCE [LARGE SCALE GENOMIC DNA]</scope>
    <source>
        <strain>C58 / ATCC 33970</strain>
    </source>
</reference>
<dbReference type="EMBL" id="AE007869">
    <property type="protein sequence ID" value="AAK86487.1"/>
    <property type="molecule type" value="Genomic_DNA"/>
</dbReference>
<dbReference type="PIR" id="AH2659">
    <property type="entry name" value="AH2659"/>
</dbReference>
<dbReference type="PIR" id="F97441">
    <property type="entry name" value="F97441"/>
</dbReference>
<dbReference type="RefSeq" id="NP_353702.1">
    <property type="nucleotide sequence ID" value="NC_003062.2"/>
</dbReference>
<dbReference type="RefSeq" id="WP_010971063.1">
    <property type="nucleotide sequence ID" value="NC_003062.2"/>
</dbReference>
<dbReference type="SMR" id="Q8UHK2"/>
<dbReference type="STRING" id="176299.Atu0678"/>
<dbReference type="EnsemblBacteria" id="AAK86487">
    <property type="protein sequence ID" value="AAK86487"/>
    <property type="gene ID" value="Atu0678"/>
</dbReference>
<dbReference type="GeneID" id="1132716"/>
<dbReference type="KEGG" id="atu:Atu0678"/>
<dbReference type="PATRIC" id="fig|176299.10.peg.674"/>
<dbReference type="eggNOG" id="COG3705">
    <property type="taxonomic scope" value="Bacteria"/>
</dbReference>
<dbReference type="HOGENOM" id="CLU_025113_6_0_5"/>
<dbReference type="OrthoDB" id="9797914at2"/>
<dbReference type="PhylomeDB" id="Q8UHK2"/>
<dbReference type="BioCyc" id="AGRO:ATU0678-MONOMER"/>
<dbReference type="UniPathway" id="UPA00031">
    <property type="reaction ID" value="UER00006"/>
</dbReference>
<dbReference type="Proteomes" id="UP000000813">
    <property type="component" value="Chromosome circular"/>
</dbReference>
<dbReference type="GO" id="GO:0005737">
    <property type="term" value="C:cytoplasm"/>
    <property type="evidence" value="ECO:0007669"/>
    <property type="project" value="UniProtKB-SubCell"/>
</dbReference>
<dbReference type="GO" id="GO:0004821">
    <property type="term" value="F:histidine-tRNA ligase activity"/>
    <property type="evidence" value="ECO:0007669"/>
    <property type="project" value="TreeGrafter"/>
</dbReference>
<dbReference type="GO" id="GO:0006427">
    <property type="term" value="P:histidyl-tRNA aminoacylation"/>
    <property type="evidence" value="ECO:0007669"/>
    <property type="project" value="TreeGrafter"/>
</dbReference>
<dbReference type="GO" id="GO:0000105">
    <property type="term" value="P:L-histidine biosynthetic process"/>
    <property type="evidence" value="ECO:0007669"/>
    <property type="project" value="UniProtKB-UniRule"/>
</dbReference>
<dbReference type="Gene3D" id="3.30.930.10">
    <property type="entry name" value="Bira Bifunctional Protein, Domain 2"/>
    <property type="match status" value="1"/>
</dbReference>
<dbReference type="HAMAP" id="MF_00125">
    <property type="entry name" value="HisZ"/>
    <property type="match status" value="1"/>
</dbReference>
<dbReference type="InterPro" id="IPR045864">
    <property type="entry name" value="aa-tRNA-synth_II/BPL/LPL"/>
</dbReference>
<dbReference type="InterPro" id="IPR041715">
    <property type="entry name" value="HisRS-like_core"/>
</dbReference>
<dbReference type="InterPro" id="IPR004516">
    <property type="entry name" value="HisRS/HisZ"/>
</dbReference>
<dbReference type="InterPro" id="IPR004517">
    <property type="entry name" value="HisZ"/>
</dbReference>
<dbReference type="NCBIfam" id="NF008951">
    <property type="entry name" value="PRK12295.1-4"/>
    <property type="match status" value="1"/>
</dbReference>
<dbReference type="PANTHER" id="PTHR43707:SF1">
    <property type="entry name" value="HISTIDINE--TRNA LIGASE, MITOCHONDRIAL-RELATED"/>
    <property type="match status" value="1"/>
</dbReference>
<dbReference type="PANTHER" id="PTHR43707">
    <property type="entry name" value="HISTIDYL-TRNA SYNTHETASE"/>
    <property type="match status" value="1"/>
</dbReference>
<dbReference type="Pfam" id="PF13393">
    <property type="entry name" value="tRNA-synt_His"/>
    <property type="match status" value="2"/>
</dbReference>
<dbReference type="PIRSF" id="PIRSF001549">
    <property type="entry name" value="His-tRNA_synth"/>
    <property type="match status" value="1"/>
</dbReference>
<dbReference type="SUPFAM" id="SSF55681">
    <property type="entry name" value="Class II aaRS and biotin synthetases"/>
    <property type="match status" value="1"/>
</dbReference>
<sequence length="375" mass="40756">MPLIDMPEFAGELLEEFAARRTSRVNTPVIQPAEPFLDMAGEDLRRRIFMTESETGESLCLRPEFTIPVCLRHIETATGTPKRYSYLGEVFRQRREGASEFYQAGIEDLGDTDIAAADARVVIDATAILQRLLPGRSLAVTLGDQQVFEAVVAALGLPLGWQKRLVQAFGDMAQLDALLESLVHPKPMTGLDARVAGLLATGDEAVLVDYLDTVMQETGYSTNASRSPLEIARRLREKLALAATRLPDESFELLKQFLALQAPLPQASQVLGDFAARAKLKLDGALSAFDKRVAALANAGVDLETVTYGAAFGRPLDYYTGLVFEVVEAGSDSVLAGGGRYDRLLTLLGAQEKIPAVGFSLWLDRIKAVRGSDKP</sequence>
<keyword id="KW-0028">Amino-acid biosynthesis</keyword>
<keyword id="KW-0963">Cytoplasm</keyword>
<keyword id="KW-0368">Histidine biosynthesis</keyword>
<keyword id="KW-1185">Reference proteome</keyword>
<comment type="function">
    <text evidence="1">Required for the first step of histidine biosynthesis. May allow the feedback regulation of ATP phosphoribosyltransferase activity by histidine.</text>
</comment>
<comment type="pathway">
    <text evidence="1">Amino-acid biosynthesis; L-histidine biosynthesis; L-histidine from 5-phospho-alpha-D-ribose 1-diphosphate: step 1/9.</text>
</comment>
<comment type="subunit">
    <text evidence="1">Heteromultimer composed of HisG and HisZ subunits.</text>
</comment>
<comment type="subcellular location">
    <subcellularLocation>
        <location evidence="1">Cytoplasm</location>
    </subcellularLocation>
</comment>
<comment type="miscellaneous">
    <text>This function is generally fulfilled by the C-terminal part of HisG, which is missing in some bacteria such as this one.</text>
</comment>
<comment type="similarity">
    <text evidence="1">Belongs to the class-II aminoacyl-tRNA synthetase family. HisZ subfamily.</text>
</comment>
<protein>
    <recommendedName>
        <fullName evidence="1">ATP phosphoribosyltransferase regulatory subunit</fullName>
    </recommendedName>
</protein>
<evidence type="ECO:0000255" key="1">
    <source>
        <dbReference type="HAMAP-Rule" id="MF_00125"/>
    </source>
</evidence>
<feature type="chain" id="PRO_0000171019" description="ATP phosphoribosyltransferase regulatory subunit">
    <location>
        <begin position="1"/>
        <end position="375"/>
    </location>
</feature>
<accession>Q8UHK2</accession>
<gene>
    <name evidence="1" type="primary">hisZ</name>
    <name type="ordered locus">Atu0678</name>
    <name type="ORF">AGR_C_1214</name>
</gene>